<proteinExistence type="predicted"/>
<gene>
    <name type="ORF">T5</name>
</gene>
<protein>
    <recommendedName>
        <fullName>Ankyrin repeat protein T5</fullName>
    </recommendedName>
</protein>
<reference key="1">
    <citation type="journal article" date="1991" name="Virology">
        <title>Sequence and analysis of a portion of the genomes of Shope fibroma virus and malignant rabbit fibroma virus that is important for viral replication in lymphocytes.</title>
        <authorList>
            <person name="Strayer D.S."/>
            <person name="Jerng H.H."/>
            <person name="O'Connor K."/>
        </authorList>
    </citation>
    <scope>NUCLEOTIDE SEQUENCE [GENOMIC DNA]</scope>
</reference>
<reference key="2">
    <citation type="journal article" date="1999" name="Virology">
        <title>The complete genome sequence of shope (Rabbit) fibroma virus.</title>
        <authorList>
            <person name="Willer D.O."/>
            <person name="McFadden G."/>
            <person name="Evans D.H."/>
        </authorList>
    </citation>
    <scope>NUCLEOTIDE SEQUENCE [LARGE SCALE GENOMIC DNA]</scope>
</reference>
<reference key="3">
    <citation type="journal article" date="1986" name="Virology">
        <title>Tumorigenic poxviruses: analysis of viral DNA sequences implicated in the tumorigenicity of Shope fibroma virus and malignant rabbit virus.</title>
        <authorList>
            <person name="Upton C."/>
            <person name="McFadden G."/>
        </authorList>
    </citation>
    <scope>NUCLEOTIDE SEQUENCE [GENOMIC DNA] OF 157-484</scope>
</reference>
<reference key="4">
    <citation type="journal article" date="1987" name="Virology">
        <title>Tumorigenic poxviruses: genomic organization and DNA sequence of the telomeric region of the Shope fibroma virus genome.</title>
        <authorList>
            <person name="Upton C."/>
            <person name="Delange A.M."/>
            <person name="McFadden G."/>
        </authorList>
    </citation>
    <scope>NUCLEOTIDE SEQUENCE [GENOMIC DNA] OF 157-484</scope>
</reference>
<name>VT5_RFVKA</name>
<feature type="chain" id="PRO_0000067087" description="Ankyrin repeat protein T5">
    <location>
        <begin position="1"/>
        <end position="484"/>
    </location>
</feature>
<feature type="repeat" description="ANK 1">
    <location>
        <begin position="33"/>
        <end position="64"/>
    </location>
</feature>
<feature type="repeat" description="ANK 2">
    <location>
        <begin position="68"/>
        <end position="102"/>
    </location>
</feature>
<feature type="repeat" description="ANK 3">
    <location>
        <begin position="106"/>
        <end position="138"/>
    </location>
</feature>
<feature type="repeat" description="ANK 4">
    <location>
        <begin position="142"/>
        <end position="173"/>
    </location>
</feature>
<feature type="repeat" description="ANK 5">
    <location>
        <begin position="178"/>
        <end position="211"/>
    </location>
</feature>
<feature type="repeat" description="ANK 6">
    <location>
        <begin position="251"/>
        <end position="280"/>
    </location>
</feature>
<feature type="repeat" description="ANK 7">
    <location>
        <begin position="284"/>
        <end position="313"/>
    </location>
</feature>
<accession>P25947</accession>
<accession>Q9PX60</accession>
<keyword id="KW-0040">ANK repeat</keyword>
<keyword id="KW-1185">Reference proteome</keyword>
<keyword id="KW-0677">Repeat</keyword>
<organism>
    <name type="scientific">Rabbit fibroma virus (strain Kasza)</name>
    <name type="common">RFV</name>
    <name type="synonym">Shope fibroma virus (strain Kasza)</name>
    <dbReference type="NCBI Taxonomy" id="10272"/>
    <lineage>
        <taxon>Viruses</taxon>
        <taxon>Varidnaviria</taxon>
        <taxon>Bamfordvirae</taxon>
        <taxon>Nucleocytoviricota</taxon>
        <taxon>Pokkesviricetes</taxon>
        <taxon>Chitovirales</taxon>
        <taxon>Poxviridae</taxon>
        <taxon>Chordopoxvirinae</taxon>
        <taxon>Leporipoxvirus</taxon>
        <taxon>Rabbit fibroma virus</taxon>
    </lineage>
</organism>
<organismHost>
    <name type="scientific">Oryctolagus cuniculus</name>
    <name type="common">Rabbit</name>
    <dbReference type="NCBI Taxonomy" id="9986"/>
</organismHost>
<sequence>MDLYGYVACALRLRYGVLDAFLNVYNPDELSAMDDTPFSLYLTRYDCTLETLRLFLKRGVDVNGVRGTRTSPLCTVLSNKELGKEAETLAMCLIDAGADVNARGADGRYPLLCLLENDRINTTSFVKYMIDRGTLVCVRGIDGCGPIQTYLRSKNVVLETLHVLVRAGASIHDMDKKYGFNILQCYMISHVRSSDVRILRFLAGQGVNSSQGFNATFMFDMLERKISYGVFNRKVLDFIFTQISVNQQDSLDFTPINYCVIHNDRRTFDYLLEKGANPNVVNFLGNSCLDLAVLNGNKYMTLRLLRKTITPDAYARALKVINYNIYSINSFGMREFVTRHRTMYKALIRSFIKDSDMEIYTYNHIYDFFKEFVDECIRERDAMKADVLDSVSMFDVIFGRVSRIRWKHVRVISKYVRGAYGDKVKKILRSLYTRRFKTNRLVHYITDLCGTSCLWTHLPVEVRYTIVDYLNDGEIHYLFMKLHA</sequence>
<dbReference type="EMBL" id="M17433">
    <property type="status" value="NOT_ANNOTATED_CDS"/>
    <property type="molecule type" value="Genomic_DNA"/>
</dbReference>
<dbReference type="EMBL" id="AF170722">
    <property type="protein sequence ID" value="AAF17888.1"/>
    <property type="molecule type" value="Genomic_DNA"/>
</dbReference>
<dbReference type="EMBL" id="AF170722">
    <property type="protein sequence ID" value="AAF18037.1"/>
    <property type="molecule type" value="Genomic_DNA"/>
</dbReference>
<dbReference type="PIR" id="G43692">
    <property type="entry name" value="G43692"/>
</dbReference>
<dbReference type="RefSeq" id="NP_051892.1">
    <property type="nucleotide sequence ID" value="NC_001266.1"/>
</dbReference>
<dbReference type="RefSeq" id="NP_052044.1">
    <property type="nucleotide sequence ID" value="NC_001266.1"/>
</dbReference>
<dbReference type="SMR" id="P25947"/>
<dbReference type="KEGG" id="vg:1486849"/>
<dbReference type="KEGG" id="vg:1486998"/>
<dbReference type="Proteomes" id="UP000000868">
    <property type="component" value="Segment"/>
</dbReference>
<dbReference type="Gene3D" id="1.25.40.20">
    <property type="entry name" value="Ankyrin repeat-containing domain"/>
    <property type="match status" value="2"/>
</dbReference>
<dbReference type="InterPro" id="IPR002110">
    <property type="entry name" value="Ankyrin_rpt"/>
</dbReference>
<dbReference type="InterPro" id="IPR036770">
    <property type="entry name" value="Ankyrin_rpt-contain_sf"/>
</dbReference>
<dbReference type="InterPro" id="IPR018272">
    <property type="entry name" value="PRANC_domain"/>
</dbReference>
<dbReference type="PANTHER" id="PTHR24198">
    <property type="entry name" value="ANKYRIN REPEAT AND PROTEIN KINASE DOMAIN-CONTAINING PROTEIN"/>
    <property type="match status" value="1"/>
</dbReference>
<dbReference type="PANTHER" id="PTHR24198:SF165">
    <property type="entry name" value="ANKYRIN REPEAT-CONTAINING PROTEIN-RELATED"/>
    <property type="match status" value="1"/>
</dbReference>
<dbReference type="Pfam" id="PF00023">
    <property type="entry name" value="Ank"/>
    <property type="match status" value="1"/>
</dbReference>
<dbReference type="Pfam" id="PF09372">
    <property type="entry name" value="PRANC"/>
    <property type="match status" value="1"/>
</dbReference>
<dbReference type="SMART" id="SM00248">
    <property type="entry name" value="ANK"/>
    <property type="match status" value="7"/>
</dbReference>
<dbReference type="SUPFAM" id="SSF48403">
    <property type="entry name" value="Ankyrin repeat"/>
    <property type="match status" value="1"/>
</dbReference>
<dbReference type="PROSITE" id="PS50297">
    <property type="entry name" value="ANK_REP_REGION"/>
    <property type="match status" value="1"/>
</dbReference>